<dbReference type="EMBL" id="X78898">
    <property type="status" value="NOT_ANNOTATED_CDS"/>
    <property type="molecule type" value="Genomic_DNA"/>
</dbReference>
<dbReference type="EMBL" id="Z71487">
    <property type="protein sequence ID" value="CAA96113.1"/>
    <property type="molecule type" value="Genomic_DNA"/>
</dbReference>
<dbReference type="EMBL" id="BK006947">
    <property type="protein sequence ID" value="DAA10345.1"/>
    <property type="molecule type" value="Genomic_DNA"/>
</dbReference>
<dbReference type="PIR" id="S63168">
    <property type="entry name" value="S63168"/>
</dbReference>
<dbReference type="RefSeq" id="NP_014188.1">
    <property type="nucleotide sequence ID" value="NM_001183049.1"/>
</dbReference>
<dbReference type="BioGRID" id="35625">
    <property type="interactions" value="27"/>
</dbReference>
<dbReference type="DIP" id="DIP-5320N"/>
<dbReference type="FunCoup" id="P53869">
    <property type="interactions" value="36"/>
</dbReference>
<dbReference type="IntAct" id="P53869">
    <property type="interactions" value="1"/>
</dbReference>
<dbReference type="PaxDb" id="4932-YNL211C"/>
<dbReference type="PeptideAtlas" id="P53869"/>
<dbReference type="EnsemblFungi" id="YNL211C_mRNA">
    <property type="protein sequence ID" value="YNL211C"/>
    <property type="gene ID" value="YNL211C"/>
</dbReference>
<dbReference type="GeneID" id="855510"/>
<dbReference type="KEGG" id="sce:YNL211C"/>
<dbReference type="AGR" id="SGD:S000005155"/>
<dbReference type="SGD" id="S000005155">
    <property type="gene designation" value="MRX7"/>
</dbReference>
<dbReference type="VEuPathDB" id="FungiDB:YNL211C"/>
<dbReference type="eggNOG" id="ENOG502S73A">
    <property type="taxonomic scope" value="Eukaryota"/>
</dbReference>
<dbReference type="HOGENOM" id="CLU_177980_0_0_1"/>
<dbReference type="InParanoid" id="P53869"/>
<dbReference type="OMA" id="RILFWDE"/>
<dbReference type="OrthoDB" id="4138121at2759"/>
<dbReference type="BioCyc" id="YEAST:G3O-33217-MONOMER"/>
<dbReference type="BioGRID-ORCS" id="855510">
    <property type="hits" value="0 hits in 10 CRISPR screens"/>
</dbReference>
<dbReference type="PRO" id="PR:P53869"/>
<dbReference type="Proteomes" id="UP000002311">
    <property type="component" value="Chromosome XIV"/>
</dbReference>
<dbReference type="RNAct" id="P53869">
    <property type="molecule type" value="protein"/>
</dbReference>
<dbReference type="GO" id="GO:0005739">
    <property type="term" value="C:mitochondrion"/>
    <property type="evidence" value="ECO:0007005"/>
    <property type="project" value="SGD"/>
</dbReference>
<dbReference type="InterPro" id="IPR020301">
    <property type="entry name" value="Mrx7"/>
</dbReference>
<dbReference type="Pfam" id="PF10906">
    <property type="entry name" value="Mrx7"/>
    <property type="match status" value="1"/>
</dbReference>
<comment type="function">
    <text evidence="2">Component of MIOREX complexes, large expressome-like assemblies of ribosomes with factors involved in all the steps of post-transcriptional gene expression.</text>
</comment>
<comment type="subunit">
    <text evidence="2">Associates with the mitochondrial ribosome.</text>
</comment>
<comment type="subcellular location">
    <subcellularLocation>
        <location evidence="1">Mitochondrion</location>
    </subcellularLocation>
</comment>
<reference key="1">
    <citation type="journal article" date="1995" name="Yeast">
        <title>The sequence of a 13.5 kb DNA segment from the left arm of yeast chromosome XIV reveals MER1; RAP1; a new putative member of the DNA replication complex and a new putative serine/threonine phosphatase gene.</title>
        <authorList>
            <person name="Coster F."/>
            <person name="van Dyck L."/>
            <person name="Jonniaux J.-L."/>
            <person name="Purnelle B."/>
            <person name="Goffeau A."/>
        </authorList>
    </citation>
    <scope>NUCLEOTIDE SEQUENCE [GENOMIC DNA]</scope>
    <source>
        <strain>ATCC 96604 / S288c / FY1679</strain>
    </source>
</reference>
<reference key="2">
    <citation type="journal article" date="1997" name="Nature">
        <title>The nucleotide sequence of Saccharomyces cerevisiae chromosome XIV and its evolutionary implications.</title>
        <authorList>
            <person name="Philippsen P."/>
            <person name="Kleine K."/>
            <person name="Poehlmann R."/>
            <person name="Duesterhoeft A."/>
            <person name="Hamberg K."/>
            <person name="Hegemann J.H."/>
            <person name="Obermaier B."/>
            <person name="Urrestarazu L.A."/>
            <person name="Aert R."/>
            <person name="Albermann K."/>
            <person name="Altmann R."/>
            <person name="Andre B."/>
            <person name="Baladron V."/>
            <person name="Ballesta J.P.G."/>
            <person name="Becam A.-M."/>
            <person name="Beinhauer J.D."/>
            <person name="Boskovic J."/>
            <person name="Buitrago M.J."/>
            <person name="Bussereau F."/>
            <person name="Coster F."/>
            <person name="Crouzet M."/>
            <person name="D'Angelo M."/>
            <person name="Dal Pero F."/>
            <person name="De Antoni A."/>
            <person name="del Rey F."/>
            <person name="Doignon F."/>
            <person name="Domdey H."/>
            <person name="Dubois E."/>
            <person name="Fiedler T.A."/>
            <person name="Fleig U."/>
            <person name="Floeth M."/>
            <person name="Fritz C."/>
            <person name="Gaillardin C."/>
            <person name="Garcia-Cantalejo J.M."/>
            <person name="Glansdorff N."/>
            <person name="Goffeau A."/>
            <person name="Gueldener U."/>
            <person name="Herbert C.J."/>
            <person name="Heumann K."/>
            <person name="Heuss-Neitzel D."/>
            <person name="Hilbert H."/>
            <person name="Hinni K."/>
            <person name="Iraqui Houssaini I."/>
            <person name="Jacquet M."/>
            <person name="Jimenez A."/>
            <person name="Jonniaux J.-L."/>
            <person name="Karpfinger-Hartl L."/>
            <person name="Lanfranchi G."/>
            <person name="Lepingle A."/>
            <person name="Levesque H."/>
            <person name="Lyck R."/>
            <person name="Maftahi M."/>
            <person name="Mallet L."/>
            <person name="Maurer C.T.C."/>
            <person name="Messenguy F."/>
            <person name="Mewes H.-W."/>
            <person name="Moestl D."/>
            <person name="Nasr F."/>
            <person name="Nicaud J.-M."/>
            <person name="Niedenthal R.K."/>
            <person name="Pandolfo D."/>
            <person name="Pierard A."/>
            <person name="Piravandi E."/>
            <person name="Planta R.J."/>
            <person name="Pohl T.M."/>
            <person name="Purnelle B."/>
            <person name="Rebischung C."/>
            <person name="Remacha M.A."/>
            <person name="Revuelta J.L."/>
            <person name="Rinke M."/>
            <person name="Saiz J.E."/>
            <person name="Sartorello F."/>
            <person name="Scherens B."/>
            <person name="Sen-Gupta M."/>
            <person name="Soler-Mira A."/>
            <person name="Urbanus J.H.M."/>
            <person name="Valle G."/>
            <person name="Van Dyck L."/>
            <person name="Verhasselt P."/>
            <person name="Vierendeels F."/>
            <person name="Vissers S."/>
            <person name="Voet M."/>
            <person name="Volckaert G."/>
            <person name="Wach A."/>
            <person name="Wambutt R."/>
            <person name="Wedler H."/>
            <person name="Zollner A."/>
            <person name="Hani J."/>
        </authorList>
    </citation>
    <scope>NUCLEOTIDE SEQUENCE [LARGE SCALE GENOMIC DNA]</scope>
    <source>
        <strain>ATCC 204508 / S288c</strain>
    </source>
</reference>
<reference key="3">
    <citation type="journal article" date="2014" name="G3 (Bethesda)">
        <title>The reference genome sequence of Saccharomyces cerevisiae: Then and now.</title>
        <authorList>
            <person name="Engel S.R."/>
            <person name="Dietrich F.S."/>
            <person name="Fisk D.G."/>
            <person name="Binkley G."/>
            <person name="Balakrishnan R."/>
            <person name="Costanzo M.C."/>
            <person name="Dwight S.S."/>
            <person name="Hitz B.C."/>
            <person name="Karra K."/>
            <person name="Nash R.S."/>
            <person name="Weng S."/>
            <person name="Wong E.D."/>
            <person name="Lloyd P."/>
            <person name="Skrzypek M.S."/>
            <person name="Miyasato S.R."/>
            <person name="Simison M."/>
            <person name="Cherry J.M."/>
        </authorList>
    </citation>
    <scope>GENOME REANNOTATION</scope>
    <source>
        <strain>ATCC 204508 / S288c</strain>
    </source>
</reference>
<reference key="4">
    <citation type="journal article" date="2003" name="Nature">
        <title>Global analysis of protein localization in budding yeast.</title>
        <authorList>
            <person name="Huh W.-K."/>
            <person name="Falvo J.V."/>
            <person name="Gerke L.C."/>
            <person name="Carroll A.S."/>
            <person name="Howson R.W."/>
            <person name="Weissman J.S."/>
            <person name="O'Shea E.K."/>
        </authorList>
    </citation>
    <scope>SUBCELLULAR LOCATION [LARGE SCALE ANALYSIS]</scope>
</reference>
<reference key="5">
    <citation type="journal article" date="2015" name="Cell Rep.">
        <title>Organization of mitochondrial gene expression in two distinct ribosome-containing assemblies.</title>
        <authorList>
            <person name="Kehrein K."/>
            <person name="Schilling R."/>
            <person name="Moller-Hergt B.V."/>
            <person name="Wurm C.A."/>
            <person name="Jakobs S."/>
            <person name="Lamkemeyer T."/>
            <person name="Langer T."/>
            <person name="Ott M."/>
        </authorList>
    </citation>
    <scope>FUNCTION</scope>
    <scope>SUBUNIT</scope>
</reference>
<feature type="chain" id="PRO_0000203390" description="MIOREX complex component 7">
    <location>
        <begin position="1"/>
        <end position="86"/>
    </location>
</feature>
<accession>P53869</accession>
<accession>D6W0X9</accession>
<sequence>MPPRSIEEWFYYKLLSSPGFHRFVRKVYRKVNGIKEDPFTDQSTAFQYLYKPTPRQKFKALRLLFWDEMRSTFGFRRRLGDRFKKD</sequence>
<name>MRX7_YEAST</name>
<protein>
    <recommendedName>
        <fullName evidence="4">MIOREX complex component 7</fullName>
    </recommendedName>
    <alternativeName>
        <fullName evidence="3">Mitochondrial organization of gene expression protein 7</fullName>
    </alternativeName>
</protein>
<keyword id="KW-0496">Mitochondrion</keyword>
<keyword id="KW-1185">Reference proteome</keyword>
<organism>
    <name type="scientific">Saccharomyces cerevisiae (strain ATCC 204508 / S288c)</name>
    <name type="common">Baker's yeast</name>
    <dbReference type="NCBI Taxonomy" id="559292"/>
    <lineage>
        <taxon>Eukaryota</taxon>
        <taxon>Fungi</taxon>
        <taxon>Dikarya</taxon>
        <taxon>Ascomycota</taxon>
        <taxon>Saccharomycotina</taxon>
        <taxon>Saccharomycetes</taxon>
        <taxon>Saccharomycetales</taxon>
        <taxon>Saccharomycetaceae</taxon>
        <taxon>Saccharomyces</taxon>
    </lineage>
</organism>
<evidence type="ECO:0000269" key="1">
    <source>
    </source>
</evidence>
<evidence type="ECO:0000269" key="2">
    <source>
    </source>
</evidence>
<evidence type="ECO:0000303" key="3">
    <source>
    </source>
</evidence>
<evidence type="ECO:0000305" key="4">
    <source>
    </source>
</evidence>
<evidence type="ECO:0000312" key="5">
    <source>
        <dbReference type="SGD" id="S000005155"/>
    </source>
</evidence>
<proteinExistence type="evidence at protein level"/>
<gene>
    <name evidence="3" type="primary">MRX7</name>
    <name evidence="5" type="ordered locus">YNL211C</name>
    <name type="ORF">N1328</name>
</gene>